<reference key="1">
    <citation type="submission" date="2004-11" db="EMBL/GenBank/DDBJ databases">
        <authorList>
            <consortium name="The German cDNA consortium"/>
        </authorList>
    </citation>
    <scope>NUCLEOTIDE SEQUENCE [LARGE SCALE MRNA]</scope>
    <source>
        <tissue>Brain cortex</tissue>
    </source>
</reference>
<name>VATB2_PONAB</name>
<protein>
    <recommendedName>
        <fullName>V-type proton ATPase subunit B, brain isoform</fullName>
        <shortName>V-ATPase subunit B 2</shortName>
    </recommendedName>
    <alternativeName>
        <fullName>Vacuolar proton pump subunit B 2</fullName>
    </alternativeName>
</protein>
<evidence type="ECO:0000250" key="1">
    <source>
        <dbReference type="UniProtKB" id="P21281"/>
    </source>
</evidence>
<evidence type="ECO:0000250" key="2">
    <source>
        <dbReference type="UniProtKB" id="P62814"/>
    </source>
</evidence>
<evidence type="ECO:0000250" key="3">
    <source>
        <dbReference type="UniProtKB" id="P62815"/>
    </source>
</evidence>
<evidence type="ECO:0000305" key="4"/>
<gene>
    <name type="primary">ATP6V1B2</name>
</gene>
<feature type="chain" id="PRO_0000144628" description="V-type proton ATPase subunit B, brain isoform">
    <location>
        <begin position="1"/>
        <end position="511"/>
    </location>
</feature>
<feature type="binding site" evidence="1">
    <location>
        <position position="400"/>
    </location>
    <ligand>
        <name>ATP</name>
        <dbReference type="ChEBI" id="CHEBI:30616"/>
    </ligand>
</feature>
<organism>
    <name type="scientific">Pongo abelii</name>
    <name type="common">Sumatran orangutan</name>
    <name type="synonym">Pongo pygmaeus abelii</name>
    <dbReference type="NCBI Taxonomy" id="9601"/>
    <lineage>
        <taxon>Eukaryota</taxon>
        <taxon>Metazoa</taxon>
        <taxon>Chordata</taxon>
        <taxon>Craniata</taxon>
        <taxon>Vertebrata</taxon>
        <taxon>Euteleostomi</taxon>
        <taxon>Mammalia</taxon>
        <taxon>Eutheria</taxon>
        <taxon>Euarchontoglires</taxon>
        <taxon>Primates</taxon>
        <taxon>Haplorrhini</taxon>
        <taxon>Catarrhini</taxon>
        <taxon>Hominidae</taxon>
        <taxon>Pongo</taxon>
    </lineage>
</organism>
<comment type="function">
    <text evidence="1 2">Non-catalytic subunit of the V1 complex of vacuolar(H+)-ATPase (V-ATPase), a multisubunit enzyme composed of a peripheral complex (V1) that hydrolyzes ATP and a membrane integral complex (V0) that translocates protons (By similarity). V-ATPase is responsible for acidifying and maintaining the pH of intracellular compartments and in some cell types, is targeted to the plasma membrane, where it is responsible for acidifying the extracellular environment (By similarity). In renal intercalated cells, can partially compensate the lack of ATP6V1B1 and mediate secretion of protons (H+) into the urine under base-line conditions but not in conditions of acid load (By similarity).</text>
</comment>
<comment type="subunit">
    <text evidence="1">V-ATPase is a heteromultimeric enzyme made up of two complexes: the ATP-hydrolytic V1 complex and the proton translocation V0 complex (By similarity). The V1 complex consists of three catalytic AB heterodimers that form a heterohexamer, three peripheral stalks each consisting of EG heterodimers, one central rotor including subunits D and F, and the regulatory subunits C and H (By similarity). The proton translocation complex V0 consists of the proton transport subunit a, a ring of proteolipid subunits c9c'', rotary subunit d, subunits e and f, and the accessory subunits ATP6AP1/Ac45 and ATP6AP2/PRR (By similarity).</text>
</comment>
<comment type="subcellular location">
    <subcellularLocation>
        <location evidence="1">Apical cell membrane</location>
    </subcellularLocation>
    <subcellularLocation>
        <location evidence="1">Melanosome</location>
    </subcellularLocation>
    <subcellularLocation>
        <location evidence="2">Cytoplasm</location>
    </subcellularLocation>
    <subcellularLocation>
        <location evidence="3">Cytoplasmic vesicle</location>
        <location evidence="3">Secretory vesicle</location>
        <location evidence="3">Synaptic vesicle membrane</location>
        <topology evidence="4">Peripheral membrane protein</topology>
    </subcellularLocation>
    <subcellularLocation>
        <location evidence="3">Cytoplasmic vesicle</location>
        <location evidence="3">Clathrin-coated vesicle membrane</location>
        <topology evidence="4">Peripheral membrane protein</topology>
    </subcellularLocation>
</comment>
<comment type="similarity">
    <text evidence="4">Belongs to the ATPase alpha/beta chains family.</text>
</comment>
<sequence length="511" mass="56531">MALRAMRGIVNGAAPELPVPTGGPTVGAREQALAVSRNYLSQPRLTYKTVSGVNGPLVILDHVKFPRYAEIVHLTLPDGTKRSGQVLEVSGSKAVVQVFEGTSGIDAKKTSCEFTGDILRTPVSEDMLGRVFNGSGKPIDRGPVVLAEDFLDIMGQPINPQCRIYPEEMIQTGISAIDGMNSIARGQKIPIFSAAGLPHNEIAAQICRQAGLVKKSKDVVDYSEENFAIVFAAMGVNMETARFFKSDFEENGSMDNVCLFLNLANDPTIERIITPRLALTTAEFLAYQCEKHVLVILTDMSSYAEALREVSAAREEVPGRRGFPGYMYTDLATIYERAGRVEGRNGSITQIPILTMPNDDITHPIPDLTGYITEGQIYVDRQLHNRQIYPPINVLPSLSRLMKSAIGEGMTRKDHADVSNQLYACYAIGKDVQAMKAVVGEEALTSDDLLYLEFLQKFERNFIAQGPYENRTVFETLDIGWQLLRIFPKEMLKRIPQSTLSEFYPRDSAKH</sequence>
<keyword id="KW-0067">ATP-binding</keyword>
<keyword id="KW-1003">Cell membrane</keyword>
<keyword id="KW-0963">Cytoplasm</keyword>
<keyword id="KW-0968">Cytoplasmic vesicle</keyword>
<keyword id="KW-0375">Hydrogen ion transport</keyword>
<keyword id="KW-0406">Ion transport</keyword>
<keyword id="KW-0472">Membrane</keyword>
<keyword id="KW-0547">Nucleotide-binding</keyword>
<keyword id="KW-1185">Reference proteome</keyword>
<keyword id="KW-0770">Synapse</keyword>
<keyword id="KW-0813">Transport</keyword>
<dbReference type="EMBL" id="CR860747">
    <property type="protein sequence ID" value="CAH92861.1"/>
    <property type="molecule type" value="mRNA"/>
</dbReference>
<dbReference type="RefSeq" id="NP_001126673.1">
    <property type="nucleotide sequence ID" value="NM_001133201.1"/>
</dbReference>
<dbReference type="SMR" id="Q5R5V5"/>
<dbReference type="FunCoup" id="Q5R5V5">
    <property type="interactions" value="2861"/>
</dbReference>
<dbReference type="STRING" id="9601.ENSPPYP00000013735"/>
<dbReference type="Ensembl" id="ENSPPYT00000021448.3">
    <property type="protein sequence ID" value="ENSPPYP00000020619.3"/>
    <property type="gene ID" value="ENSPPYG00000018403.3"/>
</dbReference>
<dbReference type="GeneID" id="100173673"/>
<dbReference type="KEGG" id="pon:100173673"/>
<dbReference type="CTD" id="526"/>
<dbReference type="eggNOG" id="KOG1351">
    <property type="taxonomic scope" value="Eukaryota"/>
</dbReference>
<dbReference type="GeneTree" id="ENSGT00940000155068"/>
<dbReference type="InParanoid" id="Q5R5V5"/>
<dbReference type="OMA" id="EGFKIKP"/>
<dbReference type="OrthoDB" id="1735853at2759"/>
<dbReference type="Proteomes" id="UP000001595">
    <property type="component" value="Chromosome 8"/>
</dbReference>
<dbReference type="GO" id="GO:0016324">
    <property type="term" value="C:apical plasma membrane"/>
    <property type="evidence" value="ECO:0000250"/>
    <property type="project" value="UniProtKB"/>
</dbReference>
<dbReference type="GO" id="GO:0030665">
    <property type="term" value="C:clathrin-coated vesicle membrane"/>
    <property type="evidence" value="ECO:0007669"/>
    <property type="project" value="UniProtKB-SubCell"/>
</dbReference>
<dbReference type="GO" id="GO:0005829">
    <property type="term" value="C:cytosol"/>
    <property type="evidence" value="ECO:0000250"/>
    <property type="project" value="UniProtKB"/>
</dbReference>
<dbReference type="GO" id="GO:0042470">
    <property type="term" value="C:melanosome"/>
    <property type="evidence" value="ECO:0007669"/>
    <property type="project" value="UniProtKB-SubCell"/>
</dbReference>
<dbReference type="GO" id="GO:0005902">
    <property type="term" value="C:microvillus"/>
    <property type="evidence" value="ECO:0007669"/>
    <property type="project" value="Ensembl"/>
</dbReference>
<dbReference type="GO" id="GO:0005886">
    <property type="term" value="C:plasma membrane"/>
    <property type="evidence" value="ECO:0000250"/>
    <property type="project" value="UniProtKB"/>
</dbReference>
<dbReference type="GO" id="GO:0001726">
    <property type="term" value="C:ruffle"/>
    <property type="evidence" value="ECO:0007669"/>
    <property type="project" value="Ensembl"/>
</dbReference>
<dbReference type="GO" id="GO:0030672">
    <property type="term" value="C:synaptic vesicle membrane"/>
    <property type="evidence" value="ECO:0007669"/>
    <property type="project" value="UniProtKB-SubCell"/>
</dbReference>
<dbReference type="GO" id="GO:0000221">
    <property type="term" value="C:vacuolar proton-transporting V-type ATPase, V1 domain"/>
    <property type="evidence" value="ECO:0000250"/>
    <property type="project" value="UniProtKB"/>
</dbReference>
<dbReference type="GO" id="GO:0005524">
    <property type="term" value="F:ATP binding"/>
    <property type="evidence" value="ECO:0007669"/>
    <property type="project" value="UniProtKB-KW"/>
</dbReference>
<dbReference type="GO" id="GO:0046961">
    <property type="term" value="F:proton-transporting ATPase activity, rotational mechanism"/>
    <property type="evidence" value="ECO:0007669"/>
    <property type="project" value="InterPro"/>
</dbReference>
<dbReference type="GO" id="GO:0046034">
    <property type="term" value="P:ATP metabolic process"/>
    <property type="evidence" value="ECO:0007669"/>
    <property type="project" value="InterPro"/>
</dbReference>
<dbReference type="GO" id="GO:0097401">
    <property type="term" value="P:synaptic vesicle lumen acidification"/>
    <property type="evidence" value="ECO:0007669"/>
    <property type="project" value="Ensembl"/>
</dbReference>
<dbReference type="GO" id="GO:0007035">
    <property type="term" value="P:vacuolar acidification"/>
    <property type="evidence" value="ECO:0007669"/>
    <property type="project" value="TreeGrafter"/>
</dbReference>
<dbReference type="CDD" id="cd18112">
    <property type="entry name" value="ATP-synt_V_A-type_beta_C"/>
    <property type="match status" value="1"/>
</dbReference>
<dbReference type="CDD" id="cd18118">
    <property type="entry name" value="ATP-synt_V_A-type_beta_N"/>
    <property type="match status" value="1"/>
</dbReference>
<dbReference type="CDD" id="cd01135">
    <property type="entry name" value="V_A-ATPase_B"/>
    <property type="match status" value="1"/>
</dbReference>
<dbReference type="FunFam" id="3.40.50.12240:FF:000001">
    <property type="entry name" value="V-type proton ATPase subunit B, brain"/>
    <property type="match status" value="1"/>
</dbReference>
<dbReference type="Gene3D" id="3.40.50.12240">
    <property type="match status" value="1"/>
</dbReference>
<dbReference type="HAMAP" id="MF_00310">
    <property type="entry name" value="ATP_synth_B_arch"/>
    <property type="match status" value="1"/>
</dbReference>
<dbReference type="InterPro" id="IPR055190">
    <property type="entry name" value="ATP-synt_VA_C"/>
</dbReference>
<dbReference type="InterPro" id="IPR020003">
    <property type="entry name" value="ATPase_a/bsu_AS"/>
</dbReference>
<dbReference type="InterPro" id="IPR004100">
    <property type="entry name" value="ATPase_F1/V1/A1_a/bsu_N"/>
</dbReference>
<dbReference type="InterPro" id="IPR000194">
    <property type="entry name" value="ATPase_F1/V1/A1_a/bsu_nucl-bd"/>
</dbReference>
<dbReference type="InterPro" id="IPR005723">
    <property type="entry name" value="ATPase_V1-cplx_bsu"/>
</dbReference>
<dbReference type="InterPro" id="IPR027417">
    <property type="entry name" value="P-loop_NTPase"/>
</dbReference>
<dbReference type="InterPro" id="IPR022879">
    <property type="entry name" value="V-ATPase_su_B/beta"/>
</dbReference>
<dbReference type="NCBIfam" id="NF003235">
    <property type="entry name" value="PRK04196.1"/>
    <property type="match status" value="1"/>
</dbReference>
<dbReference type="NCBIfam" id="TIGR01040">
    <property type="entry name" value="V-ATPase_V1_B"/>
    <property type="match status" value="1"/>
</dbReference>
<dbReference type="PANTHER" id="PTHR43389">
    <property type="entry name" value="V-TYPE PROTON ATPASE SUBUNIT B"/>
    <property type="match status" value="1"/>
</dbReference>
<dbReference type="PANTHER" id="PTHR43389:SF5">
    <property type="entry name" value="V-TYPE PROTON ATPASE SUBUNIT B, BRAIN ISOFORM"/>
    <property type="match status" value="1"/>
</dbReference>
<dbReference type="Pfam" id="PF00006">
    <property type="entry name" value="ATP-synt_ab"/>
    <property type="match status" value="1"/>
</dbReference>
<dbReference type="Pfam" id="PF02874">
    <property type="entry name" value="ATP-synt_ab_N"/>
    <property type="match status" value="1"/>
</dbReference>
<dbReference type="Pfam" id="PF22919">
    <property type="entry name" value="ATP-synt_VA_C"/>
    <property type="match status" value="1"/>
</dbReference>
<dbReference type="PIRSF" id="PIRSF039114">
    <property type="entry name" value="V-ATPsynth_beta/V-ATPase_B"/>
    <property type="match status" value="1"/>
</dbReference>
<dbReference type="SUPFAM" id="SSF52540">
    <property type="entry name" value="P-loop containing nucleoside triphosphate hydrolases"/>
    <property type="match status" value="1"/>
</dbReference>
<dbReference type="PROSITE" id="PS00152">
    <property type="entry name" value="ATPASE_ALPHA_BETA"/>
    <property type="match status" value="1"/>
</dbReference>
<proteinExistence type="evidence at transcript level"/>
<accession>Q5R5V5</accession>